<organism>
    <name type="scientific">Salmonella typhi</name>
    <dbReference type="NCBI Taxonomy" id="90370"/>
    <lineage>
        <taxon>Bacteria</taxon>
        <taxon>Pseudomonadati</taxon>
        <taxon>Pseudomonadota</taxon>
        <taxon>Gammaproteobacteria</taxon>
        <taxon>Enterobacterales</taxon>
        <taxon>Enterobacteriaceae</taxon>
        <taxon>Salmonella</taxon>
    </lineage>
</organism>
<reference key="1">
    <citation type="journal article" date="2001" name="Nature">
        <title>Complete genome sequence of a multiple drug resistant Salmonella enterica serovar Typhi CT18.</title>
        <authorList>
            <person name="Parkhill J."/>
            <person name="Dougan G."/>
            <person name="James K.D."/>
            <person name="Thomson N.R."/>
            <person name="Pickard D."/>
            <person name="Wain J."/>
            <person name="Churcher C.M."/>
            <person name="Mungall K.L."/>
            <person name="Bentley S.D."/>
            <person name="Holden M.T.G."/>
            <person name="Sebaihia M."/>
            <person name="Baker S."/>
            <person name="Basham D."/>
            <person name="Brooks K."/>
            <person name="Chillingworth T."/>
            <person name="Connerton P."/>
            <person name="Cronin A."/>
            <person name="Davis P."/>
            <person name="Davies R.M."/>
            <person name="Dowd L."/>
            <person name="White N."/>
            <person name="Farrar J."/>
            <person name="Feltwell T."/>
            <person name="Hamlin N."/>
            <person name="Haque A."/>
            <person name="Hien T.T."/>
            <person name="Holroyd S."/>
            <person name="Jagels K."/>
            <person name="Krogh A."/>
            <person name="Larsen T.S."/>
            <person name="Leather S."/>
            <person name="Moule S."/>
            <person name="O'Gaora P."/>
            <person name="Parry C."/>
            <person name="Quail M.A."/>
            <person name="Rutherford K.M."/>
            <person name="Simmonds M."/>
            <person name="Skelton J."/>
            <person name="Stevens K."/>
            <person name="Whitehead S."/>
            <person name="Barrell B.G."/>
        </authorList>
    </citation>
    <scope>NUCLEOTIDE SEQUENCE [LARGE SCALE GENOMIC DNA]</scope>
    <source>
        <strain>CT18</strain>
    </source>
</reference>
<reference key="2">
    <citation type="journal article" date="2003" name="J. Bacteriol.">
        <title>Comparative genomics of Salmonella enterica serovar Typhi strains Ty2 and CT18.</title>
        <authorList>
            <person name="Deng W."/>
            <person name="Liou S.-R."/>
            <person name="Plunkett G. III"/>
            <person name="Mayhew G.F."/>
            <person name="Rose D.J."/>
            <person name="Burland V."/>
            <person name="Kodoyianni V."/>
            <person name="Schwartz D.C."/>
            <person name="Blattner F.R."/>
        </authorList>
    </citation>
    <scope>NUCLEOTIDE SEQUENCE [LARGE SCALE GENOMIC DNA]</scope>
    <source>
        <strain>ATCC 700931 / Ty2</strain>
    </source>
</reference>
<protein>
    <recommendedName>
        <fullName>Flagellar FliJ protein</fullName>
    </recommendedName>
</protein>
<gene>
    <name type="primary">fliJ</name>
    <name type="synonym">flaO</name>
    <name type="synonym">flaS</name>
    <name type="ordered locus">STY2181</name>
    <name type="ordered locus">t0904</name>
</gene>
<name>FLIJ_SALTI</name>
<evidence type="ECO:0000250" key="1"/>
<evidence type="ECO:0000305" key="2"/>
<comment type="function">
    <text evidence="1">Flagellar protein that affects chemotactic events.</text>
</comment>
<comment type="subcellular location">
    <subcellularLocation>
        <location evidence="1">Cell membrane</location>
        <topology evidence="1">Peripheral membrane protein</topology>
        <orientation evidence="1">Cytoplasmic side</orientation>
    </subcellularLocation>
</comment>
<comment type="similarity">
    <text evidence="2">Belongs to the FliJ family.</text>
</comment>
<keyword id="KW-1005">Bacterial flagellum biogenesis</keyword>
<keyword id="KW-1006">Bacterial flagellum protein export</keyword>
<keyword id="KW-1003">Cell membrane</keyword>
<keyword id="KW-0145">Chemotaxis</keyword>
<keyword id="KW-0472">Membrane</keyword>
<keyword id="KW-0653">Protein transport</keyword>
<keyword id="KW-0813">Transport</keyword>
<proteinExistence type="inferred from homology"/>
<accession>P0A1K2</accession>
<accession>P26463</accession>
<feature type="chain" id="PRO_0000180902" description="Flagellar FliJ protein">
    <location>
        <begin position="1"/>
        <end position="147"/>
    </location>
</feature>
<dbReference type="EMBL" id="AL513382">
    <property type="protein sequence ID" value="CAD05721.1"/>
    <property type="molecule type" value="Genomic_DNA"/>
</dbReference>
<dbReference type="EMBL" id="AE014613">
    <property type="protein sequence ID" value="AAO68582.1"/>
    <property type="molecule type" value="Genomic_DNA"/>
</dbReference>
<dbReference type="RefSeq" id="NP_456534.1">
    <property type="nucleotide sequence ID" value="NC_003198.1"/>
</dbReference>
<dbReference type="RefSeq" id="WP_000046981.1">
    <property type="nucleotide sequence ID" value="NZ_WSUR01000004.1"/>
</dbReference>
<dbReference type="SMR" id="P0A1K2"/>
<dbReference type="STRING" id="220341.gene:17586089"/>
<dbReference type="KEGG" id="stt:t0904"/>
<dbReference type="KEGG" id="sty:STY2181"/>
<dbReference type="PATRIC" id="fig|220341.7.peg.2196"/>
<dbReference type="eggNOG" id="COG2882">
    <property type="taxonomic scope" value="Bacteria"/>
</dbReference>
<dbReference type="HOGENOM" id="CLU_119965_2_1_6"/>
<dbReference type="OMA" id="TWQNYQQ"/>
<dbReference type="OrthoDB" id="6465096at2"/>
<dbReference type="Proteomes" id="UP000000541">
    <property type="component" value="Chromosome"/>
</dbReference>
<dbReference type="Proteomes" id="UP000002670">
    <property type="component" value="Chromosome"/>
</dbReference>
<dbReference type="GO" id="GO:0009288">
    <property type="term" value="C:bacterial-type flagellum"/>
    <property type="evidence" value="ECO:0007669"/>
    <property type="project" value="InterPro"/>
</dbReference>
<dbReference type="GO" id="GO:0005886">
    <property type="term" value="C:plasma membrane"/>
    <property type="evidence" value="ECO:0007669"/>
    <property type="project" value="UniProtKB-SubCell"/>
</dbReference>
<dbReference type="GO" id="GO:0003774">
    <property type="term" value="F:cytoskeletal motor activity"/>
    <property type="evidence" value="ECO:0007669"/>
    <property type="project" value="InterPro"/>
</dbReference>
<dbReference type="GO" id="GO:0044781">
    <property type="term" value="P:bacterial-type flagellum organization"/>
    <property type="evidence" value="ECO:0007669"/>
    <property type="project" value="UniProtKB-KW"/>
</dbReference>
<dbReference type="GO" id="GO:0071973">
    <property type="term" value="P:bacterial-type flagellum-dependent cell motility"/>
    <property type="evidence" value="ECO:0007669"/>
    <property type="project" value="InterPro"/>
</dbReference>
<dbReference type="GO" id="GO:0006935">
    <property type="term" value="P:chemotaxis"/>
    <property type="evidence" value="ECO:0007669"/>
    <property type="project" value="UniProtKB-KW"/>
</dbReference>
<dbReference type="GO" id="GO:0015031">
    <property type="term" value="P:protein transport"/>
    <property type="evidence" value="ECO:0007669"/>
    <property type="project" value="UniProtKB-KW"/>
</dbReference>
<dbReference type="Gene3D" id="1.10.287.1700">
    <property type="match status" value="1"/>
</dbReference>
<dbReference type="InterPro" id="IPR053716">
    <property type="entry name" value="Flag_assembly_chemotaxis_eff"/>
</dbReference>
<dbReference type="InterPro" id="IPR018006">
    <property type="entry name" value="Flag_FliJ_proteobac"/>
</dbReference>
<dbReference type="InterPro" id="IPR012823">
    <property type="entry name" value="Flagell_FliJ"/>
</dbReference>
<dbReference type="InterPro" id="IPR052570">
    <property type="entry name" value="FliJ"/>
</dbReference>
<dbReference type="NCBIfam" id="TIGR02473">
    <property type="entry name" value="flagell_FliJ"/>
    <property type="match status" value="1"/>
</dbReference>
<dbReference type="PANTHER" id="PTHR38786">
    <property type="entry name" value="FLAGELLAR FLIJ PROTEIN"/>
    <property type="match status" value="1"/>
</dbReference>
<dbReference type="PANTHER" id="PTHR38786:SF1">
    <property type="entry name" value="FLAGELLAR FLIJ PROTEIN"/>
    <property type="match status" value="1"/>
</dbReference>
<dbReference type="Pfam" id="PF02050">
    <property type="entry name" value="FliJ"/>
    <property type="match status" value="1"/>
</dbReference>
<dbReference type="PIRSF" id="PIRSF019404">
    <property type="entry name" value="FliJ"/>
    <property type="match status" value="1"/>
</dbReference>
<dbReference type="PRINTS" id="PR01004">
    <property type="entry name" value="FLGFLIJ"/>
</dbReference>
<sequence>MAQHGALETLKDLAEKEVDDAARLLGEMRRGCQQAEEQLKMLIDYQNEYRSNLNTDMGNGIASNRWINYQQFIQTLEKAIEQHRLQLTQWTQKVDLALKSWREKKQRLQAWQTLQDRQTAAALLAENRMDQKKMDEFAQRAAMRKPE</sequence>